<feature type="chain" id="PRO_1000132277" description="High frequency lysogenization protein HflD homolog">
    <location>
        <begin position="1"/>
        <end position="210"/>
    </location>
</feature>
<feature type="coiled-coil region" evidence="1">
    <location>
        <begin position="103"/>
        <end position="130"/>
    </location>
</feature>
<keyword id="KW-0997">Cell inner membrane</keyword>
<keyword id="KW-1003">Cell membrane</keyword>
<keyword id="KW-0175">Coiled coil</keyword>
<keyword id="KW-0963">Cytoplasm</keyword>
<keyword id="KW-0472">Membrane</keyword>
<reference key="1">
    <citation type="submission" date="2008-06" db="EMBL/GenBank/DDBJ databases">
        <title>Genome and proteome analysis of A. pleuropneumoniae serotype 7.</title>
        <authorList>
            <person name="Linke B."/>
            <person name="Buettner F."/>
            <person name="Martinez-Arias R."/>
            <person name="Goesmann A."/>
            <person name="Baltes N."/>
            <person name="Tegetmeyer H."/>
            <person name="Singh M."/>
            <person name="Gerlach G.F."/>
        </authorList>
    </citation>
    <scope>NUCLEOTIDE SEQUENCE [LARGE SCALE GENOMIC DNA]</scope>
    <source>
        <strain>AP76</strain>
    </source>
</reference>
<protein>
    <recommendedName>
        <fullName evidence="1">High frequency lysogenization protein HflD homolog</fullName>
    </recommendedName>
</protein>
<gene>
    <name evidence="1" type="primary">hflD</name>
    <name type="ordered locus">APP7_0882</name>
</gene>
<name>HFLD_ACTP7</name>
<dbReference type="EMBL" id="CP001091">
    <property type="protein sequence ID" value="ACE61534.1"/>
    <property type="molecule type" value="Genomic_DNA"/>
</dbReference>
<dbReference type="RefSeq" id="WP_005597292.1">
    <property type="nucleotide sequence ID" value="NC_010939.1"/>
</dbReference>
<dbReference type="SMR" id="B3H1G2"/>
<dbReference type="GeneID" id="48599012"/>
<dbReference type="KEGG" id="apa:APP7_0882"/>
<dbReference type="HOGENOM" id="CLU_098920_0_0_6"/>
<dbReference type="Proteomes" id="UP000001226">
    <property type="component" value="Chromosome"/>
</dbReference>
<dbReference type="GO" id="GO:0005737">
    <property type="term" value="C:cytoplasm"/>
    <property type="evidence" value="ECO:0007669"/>
    <property type="project" value="UniProtKB-SubCell"/>
</dbReference>
<dbReference type="GO" id="GO:0005886">
    <property type="term" value="C:plasma membrane"/>
    <property type="evidence" value="ECO:0007669"/>
    <property type="project" value="UniProtKB-SubCell"/>
</dbReference>
<dbReference type="Gene3D" id="1.10.3890.10">
    <property type="entry name" value="HflD-like"/>
    <property type="match status" value="1"/>
</dbReference>
<dbReference type="HAMAP" id="MF_00695">
    <property type="entry name" value="HflD_protein"/>
    <property type="match status" value="1"/>
</dbReference>
<dbReference type="InterPro" id="IPR007451">
    <property type="entry name" value="HflD"/>
</dbReference>
<dbReference type="InterPro" id="IPR035932">
    <property type="entry name" value="HflD-like_sf"/>
</dbReference>
<dbReference type="NCBIfam" id="NF001246">
    <property type="entry name" value="PRK00218.1-2"/>
    <property type="match status" value="1"/>
</dbReference>
<dbReference type="NCBIfam" id="NF001248">
    <property type="entry name" value="PRK00218.1-4"/>
    <property type="match status" value="1"/>
</dbReference>
<dbReference type="PANTHER" id="PTHR38100">
    <property type="entry name" value="HIGH FREQUENCY LYSOGENIZATION PROTEIN HFLD"/>
    <property type="match status" value="1"/>
</dbReference>
<dbReference type="PANTHER" id="PTHR38100:SF1">
    <property type="entry name" value="HIGH FREQUENCY LYSOGENIZATION PROTEIN HFLD"/>
    <property type="match status" value="1"/>
</dbReference>
<dbReference type="Pfam" id="PF04356">
    <property type="entry name" value="DUF489"/>
    <property type="match status" value="1"/>
</dbReference>
<dbReference type="SUPFAM" id="SSF101322">
    <property type="entry name" value="YcfC-like"/>
    <property type="match status" value="1"/>
</dbReference>
<sequence length="210" mass="23409">MATNYHDITIAFAGVCQAVSLVQQFAHKGSADREIFANSIKSLLVTQPDSTLAVFDGQLANLKLGLETVQAQMGSPNGKLDTEIGRYWINVLALSQKLNKNPEAKAKLAERLQQIERQLPLYENDIMADQMIANLAAIYSDVISPLGSKIHVLGLQDYLVRPDIQQKIRASLLAGIRAGILWQQVGGTRWQFLFSRRKILNQAQQFYKSI</sequence>
<accession>B3H1G2</accession>
<organism>
    <name type="scientific">Actinobacillus pleuropneumoniae serotype 7 (strain AP76)</name>
    <dbReference type="NCBI Taxonomy" id="537457"/>
    <lineage>
        <taxon>Bacteria</taxon>
        <taxon>Pseudomonadati</taxon>
        <taxon>Pseudomonadota</taxon>
        <taxon>Gammaproteobacteria</taxon>
        <taxon>Pasteurellales</taxon>
        <taxon>Pasteurellaceae</taxon>
        <taxon>Actinobacillus</taxon>
    </lineage>
</organism>
<evidence type="ECO:0000255" key="1">
    <source>
        <dbReference type="HAMAP-Rule" id="MF_00695"/>
    </source>
</evidence>
<comment type="subcellular location">
    <subcellularLocation>
        <location>Cytoplasm</location>
    </subcellularLocation>
    <subcellularLocation>
        <location evidence="1">Cell inner membrane</location>
        <topology evidence="1">Peripheral membrane protein</topology>
        <orientation evidence="1">Cytoplasmic side</orientation>
    </subcellularLocation>
</comment>
<comment type="similarity">
    <text evidence="1">Belongs to the HflD family.</text>
</comment>
<proteinExistence type="inferred from homology"/>